<comment type="function">
    <molecule>Nuclear factor NF-kappa-B p105 subunit</molecule>
    <text evidence="1">P105 is the precursor of the active p50 subunit (Nuclear factor NF-kappa-B p50 subunit) of the nuclear factor NF-kappa-B. The precursor protein itself does not bind to DNA. Acts as a cytoplasmic retention of attached NF-kappa-B proteins by p105.</text>
</comment>
<comment type="function">
    <molecule>Nuclear factor NF-kappa-B p50 subunit</molecule>
    <text evidence="1">Constitutes the active form, which associates with RELA/p65 to form the NF-kappa-B p65-p50 complex to form a transcription factor. Together with RELA/p65, binds to the kappa-B consensus sequence 5'-GGRNNYYCC-3', located in the enhancer region of genes involved in immune response and acute phase reactions.</text>
</comment>
<comment type="subunit">
    <text>Active NF-kappa-B is a heterodimer of an about 50 kDa DNA-binding subunit and the weak DNA-binding subunit p65. Two heterodimers might form a labile tetramer.</text>
</comment>
<comment type="subcellular location">
    <molecule>Nuclear factor NF-kappa-B p105 subunit</molecule>
    <subcellularLocation>
        <location evidence="1">Cytoplasm</location>
    </subcellularLocation>
</comment>
<comment type="subcellular location">
    <molecule>Nuclear factor NF-kappa-B p50 subunit</molecule>
    <subcellularLocation>
        <location evidence="1">Nucleus</location>
    </subcellularLocation>
    <subcellularLocation>
        <location evidence="1">Cytoplasm</location>
    </subcellularLocation>
    <text evidence="1">Association with NFKBIA inhibitor (I-kappa-B), promotes its retention in the cytoplasm in an inactive form. Translocates into the nucleus following NFKBIA degradation.</text>
</comment>
<comment type="alternative products">
    <event type="alternative splicing"/>
    <isoform>
        <id>Q04861-1</id>
        <name>1</name>
        <sequence type="displayed"/>
    </isoform>
    <isoform>
        <id>Q04861-2</id>
        <name>2</name>
        <sequence type="described" ref="VSP_042871"/>
    </isoform>
    <isoform>
        <id>Q04861-3</id>
        <name>3</name>
        <sequence type="described" ref="VSP_042872"/>
    </isoform>
</comment>
<comment type="domain">
    <text evidence="1">The C-terminus of p105 might be involved in cytoplasmic retention, inhibition of DNA-binding, and transcription activation.</text>
</comment>
<comment type="domain">
    <text evidence="1">Glycine-rich region (GRR) is a critical element in the generation of p50 (Nuclear factor NF-kappa-B p50 subunit) by acting as a proteasomal 'stop signal', which leads to limited proteasomal degradation of the C-terminus, while generating p50.</text>
</comment>
<comment type="PTM">
    <text evidence="1">Generation of the NF-kappa-B p50 (Nuclear factor NF-kappa-B p50 subunit) transcription factor takes place both cotranslationally and post-translationally via non-mutually exclusive mechanisms. A cotranslational processing allows the production of both p50 and p105 (Nuclear factor NF-kappa-B p105 subunit) from a single NFKB1 mRNA. While translation occurs, the particular unfolded structure after the GRR repeat region acts as a substrate for the proteasome, promoting degradation of the C-terminus. The GRR acts as a proteasomal 'stop signal', protecting the region upstream of the GRR from degradation and promoting generation of p50. It is unclear if limited proteasome degradation during cotranslational processing depends on ubiquitination. NF-kappa-B p50 is also generated post-translationally following ubiquitination by the KPC complex, leading to limited processing by the proteasome downstream of the GRR region, thereby generating p50.</text>
</comment>
<comment type="PTM">
    <molecule>Nuclear factor NF-kappa-B p105 subunit</molecule>
    <text evidence="1">Phosphorylation at the C-terminus by IKBKB/IKKB acts as a signal for ubiquitination and promotes either complete degradation or processing to generate the NF-kappa-B p50 (Nuclear factor NF-kappa-B p50 subunit) (By similarity). Phosphorylation at Ser-938 are required for BTRC/BTRCP-mediated ubiquitination and proteolysis (By similarity). Phosphorylation at Ser-938 is also required for ubiquitination by the KPC complex and limited processing to generate NF-kappa-B p50 (Nuclear factor NF-kappa-B p50 subunit) (By similarity).</text>
</comment>
<comment type="PTM">
    <molecule>Nuclear factor NF-kappa-B p105 subunit</molecule>
    <text evidence="1">Polyubiquitinated at multiple Lys residues in the C-terminus. Polyubiquitinated by the SCF(FBXW11) and SCF(BTRC) complexes following phosphorylation at Ser-938, leading to its complete degradation. In contrast, polyubiquitination by the KPC complex following phosphorylation at Ser-938 leads to limited proteosomal processing and generation of the active NF-kappa-B p50 (Nuclear factor NF-kappa-B p50 subunit).</text>
</comment>
<comment type="PTM">
    <text evidence="1">S-nitrosylation of Cys-66 affects DNA binding.</text>
</comment>
<comment type="PTM">
    <text evidence="1">The covalent modification of cysteine by 15-deoxy-Delta12,14-prostaglandin-J2 is autocatalytic and reversible. It may occur as an alternative to other cysteine modifications, such as S-nitrosylation and S-palmitoylation.</text>
</comment>
<comment type="sequence caution" evidence="8">
    <conflict type="erroneous initiation">
        <sequence resource="EMBL-CDS" id="AAB58343"/>
    </conflict>
    <text>Extended N-terminus.</text>
</comment>
<comment type="sequence caution" evidence="8">
    <conflict type="erroneous translation">
        <sequence resource="EMBL-CDS" id="AAB58343"/>
    </conflict>
    <text>Wrong genetic code used for translating the sequence.</text>
</comment>
<feature type="chain" id="PRO_0000030316" description="Nuclear factor NF-kappa-B p105 subunit">
    <location>
        <begin position="1"/>
        <end position="983"/>
    </location>
</feature>
<feature type="chain" id="PRO_0000030317" description="Nuclear factor NF-kappa-B p50 subunit" evidence="1">
    <location>
        <begin position="1"/>
        <end status="unknown"/>
    </location>
</feature>
<feature type="domain" description="RHD" evidence="3">
    <location>
        <begin position="47"/>
        <end position="372"/>
    </location>
</feature>
<feature type="repeat" description="ANK 1">
    <location>
        <begin position="540"/>
        <end position="569"/>
    </location>
</feature>
<feature type="repeat" description="ANK 2">
    <location>
        <begin position="579"/>
        <end position="608"/>
    </location>
</feature>
<feature type="repeat" description="ANK 3">
    <location>
        <begin position="612"/>
        <end position="641"/>
    </location>
</feature>
<feature type="repeat" description="ANK 4">
    <location>
        <begin position="648"/>
        <end position="677"/>
    </location>
</feature>
<feature type="repeat" description="ANK 5">
    <location>
        <begin position="682"/>
        <end position="712"/>
    </location>
</feature>
<feature type="repeat" description="ANK 6">
    <location>
        <begin position="716"/>
        <end position="745"/>
    </location>
</feature>
<feature type="repeat" description="ANK 7">
    <location>
        <begin position="769"/>
        <end position="799"/>
    </location>
</feature>
<feature type="domain" description="Death">
    <location>
        <begin position="804"/>
        <end position="891"/>
    </location>
</feature>
<feature type="region of interest" description="GRR" evidence="1">
    <location>
        <begin position="377"/>
        <end position="397"/>
    </location>
</feature>
<feature type="region of interest" description="Disordered" evidence="4">
    <location>
        <begin position="423"/>
        <end position="454"/>
    </location>
</feature>
<feature type="short sequence motif" description="Nuclear localization signal" evidence="2">
    <location>
        <begin position="365"/>
        <end position="370"/>
    </location>
</feature>
<feature type="compositionally biased region" description="Basic and acidic residues" evidence="4">
    <location>
        <begin position="428"/>
        <end position="454"/>
    </location>
</feature>
<feature type="modified residue" description="S-nitrosocysteine" evidence="1">
    <location>
        <position position="66"/>
    </location>
</feature>
<feature type="modified residue" description="Phosphoserine; by PKA" evidence="2">
    <location>
        <position position="342"/>
    </location>
</feature>
<feature type="modified residue" description="Phosphoserine" evidence="1">
    <location>
        <position position="938"/>
    </location>
</feature>
<feature type="splice variant" id="VSP_042871" description="In isoform 2." evidence="5 7">
    <original>Y</original>
    <variation>YG</variation>
    <location>
        <position position="970"/>
    </location>
</feature>
<feature type="splice variant" id="VSP_042872" description="In isoform 3." evidence="6">
    <original>RKAQCKAVIYLTR</original>
    <variation>GQESSVQSSYIPN</variation>
    <location>
        <begin position="971"/>
        <end position="983"/>
    </location>
</feature>
<feature type="sequence conflict" description="In Ref. 1; AAA49000." evidence="8" ref="1">
    <original>V</original>
    <variation>R</variation>
    <location>
        <position position="111"/>
    </location>
</feature>
<feature type="sequence conflict" description="In Ref. 1; AAA49000 and 3; AAB58343." evidence="8" ref="1 3">
    <original>A</original>
    <variation>R</variation>
    <location>
        <position position="513"/>
    </location>
</feature>
<feature type="sequence conflict" description="In Ref. 2; BAA02872." evidence="8" ref="2">
    <original>V</original>
    <variation>I</variation>
    <location>
        <position position="696"/>
    </location>
</feature>
<feature type="sequence conflict" description="In Ref. 2; BAA02872." evidence="8" ref="2">
    <original>ADV</original>
    <variation>VDA</variation>
    <location>
        <begin position="708"/>
        <end position="710"/>
    </location>
</feature>
<feature type="sequence conflict" description="In Ref. 3; AAB58343." evidence="8" ref="3">
    <original>L</original>
    <variation>H</variation>
    <location>
        <position position="774"/>
    </location>
</feature>
<feature type="sequence conflict" description="In Ref. 1; AAA49000." evidence="8" ref="1">
    <original>R</original>
    <variation>Q</variation>
    <location>
        <position position="848"/>
    </location>
</feature>
<feature type="sequence conflict" description="In Ref. 1; AAA49000." evidence="8" ref="1">
    <original>V</original>
    <variation>G</variation>
    <location>
        <position position="868"/>
    </location>
</feature>
<feature type="sequence conflict" description="In Ref. 1; AAA49000." evidence="8" ref="1">
    <original>L</original>
    <variation>F</variation>
    <location>
        <position position="875"/>
    </location>
</feature>
<feature type="sequence conflict" description="In Ref. 2; BAA02872." evidence="8" ref="2">
    <original>SH</original>
    <variation>IY</variation>
    <location>
        <begin position="898"/>
        <end position="899"/>
    </location>
</feature>
<feature type="sequence conflict" description="In Ref. 1; AAA49000." evidence="8" ref="1">
    <original>N</original>
    <variation>K</variation>
    <location>
        <position position="903"/>
    </location>
</feature>
<feature type="sequence conflict" description="In Ref. 3; AAB58343." evidence="8" ref="3">
    <original>S</original>
    <variation>T</variation>
    <location>
        <position position="938"/>
    </location>
</feature>
<evidence type="ECO:0000250" key="1">
    <source>
        <dbReference type="UniProtKB" id="P19838"/>
    </source>
</evidence>
<evidence type="ECO:0000255" key="2"/>
<evidence type="ECO:0000255" key="3">
    <source>
        <dbReference type="PROSITE-ProRule" id="PRU00265"/>
    </source>
</evidence>
<evidence type="ECO:0000256" key="4">
    <source>
        <dbReference type="SAM" id="MobiDB-lite"/>
    </source>
</evidence>
<evidence type="ECO:0000303" key="5">
    <source>
    </source>
</evidence>
<evidence type="ECO:0000303" key="6">
    <source>
    </source>
</evidence>
<evidence type="ECO:0000303" key="7">
    <source>
    </source>
</evidence>
<evidence type="ECO:0000305" key="8"/>
<organism>
    <name type="scientific">Gallus gallus</name>
    <name type="common">Chicken</name>
    <dbReference type="NCBI Taxonomy" id="9031"/>
    <lineage>
        <taxon>Eukaryota</taxon>
        <taxon>Metazoa</taxon>
        <taxon>Chordata</taxon>
        <taxon>Craniata</taxon>
        <taxon>Vertebrata</taxon>
        <taxon>Euteleostomi</taxon>
        <taxon>Archelosauria</taxon>
        <taxon>Archosauria</taxon>
        <taxon>Dinosauria</taxon>
        <taxon>Saurischia</taxon>
        <taxon>Theropoda</taxon>
        <taxon>Coelurosauria</taxon>
        <taxon>Aves</taxon>
        <taxon>Neognathae</taxon>
        <taxon>Galloanserae</taxon>
        <taxon>Galliformes</taxon>
        <taxon>Phasianidae</taxon>
        <taxon>Phasianinae</taxon>
        <taxon>Gallus</taxon>
    </lineage>
</organism>
<proteinExistence type="evidence at transcript level"/>
<protein>
    <recommendedName>
        <fullName>Nuclear factor NF-kappa-B p105 subunit</fullName>
    </recommendedName>
    <alternativeName>
        <fullName>Nuclear factor of kappa light polypeptide gene enhancer in B-cells 1</fullName>
    </alternativeName>
    <component>
        <recommendedName>
            <fullName>Nuclear factor NF-kappa-B p50 subunit</fullName>
        </recommendedName>
    </component>
</protein>
<accession>Q04861</accession>
<accession>E1C613</accession>
<accession>F1NU28</accession>
<accession>O13075</accession>
<dbReference type="EMBL" id="M86930">
    <property type="protein sequence ID" value="AAA49000.1"/>
    <property type="molecule type" value="mRNA"/>
</dbReference>
<dbReference type="EMBL" id="D13719">
    <property type="protein sequence ID" value="BAA02872.1"/>
    <property type="molecule type" value="mRNA"/>
</dbReference>
<dbReference type="EMBL" id="AF000241">
    <property type="protein sequence ID" value="AAB58343.1"/>
    <property type="status" value="ALT_SEQ"/>
    <property type="molecule type" value="mRNA"/>
</dbReference>
<dbReference type="EMBL" id="AADN02031451">
    <property type="status" value="NOT_ANNOTATED_CDS"/>
    <property type="molecule type" value="Genomic_DNA"/>
</dbReference>
<dbReference type="PIR" id="A41996">
    <property type="entry name" value="A41996"/>
</dbReference>
<dbReference type="RefSeq" id="NP_990465.1">
    <property type="nucleotide sequence ID" value="NM_205134.1"/>
</dbReference>
<dbReference type="RefSeq" id="XP_015140901.1">
    <property type="nucleotide sequence ID" value="XM_015285415.1"/>
</dbReference>
<dbReference type="SMR" id="Q04861"/>
<dbReference type="FunCoup" id="Q04861">
    <property type="interactions" value="742"/>
</dbReference>
<dbReference type="STRING" id="9031.ENSGALP00000036814"/>
<dbReference type="PaxDb" id="9031-ENSGALP00000036814"/>
<dbReference type="GeneID" id="396033"/>
<dbReference type="KEGG" id="gga:396033"/>
<dbReference type="CTD" id="4790"/>
<dbReference type="VEuPathDB" id="HostDB:geneid_396033"/>
<dbReference type="eggNOG" id="KOG0504">
    <property type="taxonomic scope" value="Eukaryota"/>
</dbReference>
<dbReference type="HOGENOM" id="CLU_004343_1_0_1"/>
<dbReference type="InParanoid" id="Q04861"/>
<dbReference type="OrthoDB" id="10254686at2759"/>
<dbReference type="Reactome" id="R-GGA-1169091">
    <property type="pathway name" value="Activation of NF-kappaB in B cells"/>
</dbReference>
<dbReference type="Reactome" id="R-GGA-1227892">
    <property type="pathway name" value="TRAF6 mediated NF-kB activation"/>
</dbReference>
<dbReference type="Reactome" id="R-GGA-1810476">
    <property type="pathway name" value="RIP-mediated NFkB activation via ZBP1"/>
</dbReference>
<dbReference type="Reactome" id="R-GGA-193692">
    <property type="pathway name" value="Regulated proteolysis of p75NTR"/>
</dbReference>
<dbReference type="Reactome" id="R-GGA-202424">
    <property type="pathway name" value="Downstream TCR signaling"/>
</dbReference>
<dbReference type="Reactome" id="R-GGA-209560">
    <property type="pathway name" value="NF-kB is activated and signals survival"/>
</dbReference>
<dbReference type="Reactome" id="R-GGA-2871837">
    <property type="pathway name" value="FCERI mediated NF-kB activation"/>
</dbReference>
<dbReference type="Reactome" id="R-GGA-3134963">
    <property type="pathway name" value="DEx/H-box helicases activate type I IFN and inflammatory cytokines production"/>
</dbReference>
<dbReference type="Reactome" id="R-GGA-3214841">
    <property type="pathway name" value="PKMTs methylate histone lysines"/>
</dbReference>
<dbReference type="Reactome" id="R-GGA-434001">
    <property type="pathway name" value="TAK1 activates NFkB by phosphorylation and activation of IKKs complex"/>
</dbReference>
<dbReference type="Reactome" id="R-GGA-434131">
    <property type="pathway name" value="NFkB activation mediated by RIP1 complexed with activated TLR3"/>
</dbReference>
<dbReference type="Reactome" id="R-GGA-445989">
    <property type="pathway name" value="TAK1-dependent IKK and NF-kappa-B activation"/>
</dbReference>
<dbReference type="Reactome" id="R-GGA-5607764">
    <property type="pathway name" value="CLEC7A (Dectin-1) signaling"/>
</dbReference>
<dbReference type="Reactome" id="R-GGA-5621575">
    <property type="pathway name" value="CD209 (DC-SIGN) signaling"/>
</dbReference>
<dbReference type="Reactome" id="R-GGA-5684264">
    <property type="pathway name" value="MAP3K8 (TPL2)-dependent MAPK1/3 activation"/>
</dbReference>
<dbReference type="Reactome" id="R-GGA-6798695">
    <property type="pathway name" value="Neutrophil degranulation"/>
</dbReference>
<dbReference type="Reactome" id="R-GGA-9020702">
    <property type="pathway name" value="Interleukin-1 signaling"/>
</dbReference>
<dbReference type="Reactome" id="R-GGA-933542">
    <property type="pathway name" value="TRAF6 mediated NF-kB activation"/>
</dbReference>
<dbReference type="Reactome" id="R-GGA-9860927">
    <property type="pathway name" value="Turbulent (oscillatory, disturbed) flow shear stress activates signaling by PIEZO1 and integrins in endothelial cells"/>
</dbReference>
<dbReference type="PRO" id="PR:Q04861"/>
<dbReference type="Proteomes" id="UP000000539">
    <property type="component" value="Chromosome 4"/>
</dbReference>
<dbReference type="Bgee" id="ENSGALG00000012304">
    <property type="expression patterns" value="Expressed in granulocyte and 13 other cell types or tissues"/>
</dbReference>
<dbReference type="GO" id="GO:0005737">
    <property type="term" value="C:cytoplasm"/>
    <property type="evidence" value="ECO:0007669"/>
    <property type="project" value="UniProtKB-SubCell"/>
</dbReference>
<dbReference type="GO" id="GO:0035525">
    <property type="term" value="C:NF-kappaB p50/p65 complex"/>
    <property type="evidence" value="ECO:0000318"/>
    <property type="project" value="GO_Central"/>
</dbReference>
<dbReference type="GO" id="GO:0000981">
    <property type="term" value="F:DNA-binding transcription factor activity, RNA polymerase II-specific"/>
    <property type="evidence" value="ECO:0000318"/>
    <property type="project" value="GO_Central"/>
</dbReference>
<dbReference type="GO" id="GO:0051059">
    <property type="term" value="F:NF-kappaB binding"/>
    <property type="evidence" value="ECO:0000314"/>
    <property type="project" value="UniProtKB"/>
</dbReference>
<dbReference type="GO" id="GO:0000978">
    <property type="term" value="F:RNA polymerase II cis-regulatory region sequence-specific DNA binding"/>
    <property type="evidence" value="ECO:0000318"/>
    <property type="project" value="GO_Central"/>
</dbReference>
<dbReference type="GO" id="GO:0007165">
    <property type="term" value="P:signal transduction"/>
    <property type="evidence" value="ECO:0007669"/>
    <property type="project" value="InterPro"/>
</dbReference>
<dbReference type="CDD" id="cd08797">
    <property type="entry name" value="Death_NFkB1_p105"/>
    <property type="match status" value="1"/>
</dbReference>
<dbReference type="CDD" id="cd01177">
    <property type="entry name" value="IPT_NFkappaB"/>
    <property type="match status" value="1"/>
</dbReference>
<dbReference type="CDD" id="cd07935">
    <property type="entry name" value="RHD-n_NFkB1"/>
    <property type="match status" value="1"/>
</dbReference>
<dbReference type="FunFam" id="2.60.40.10:FF:000046">
    <property type="entry name" value="Nuclear factor NF-kappa-B p105 subunit"/>
    <property type="match status" value="1"/>
</dbReference>
<dbReference type="FunFam" id="1.25.40.20:FF:000103">
    <property type="entry name" value="Nuclear factor NF-kappa-B p105 subunit isoform 1"/>
    <property type="match status" value="1"/>
</dbReference>
<dbReference type="FunFam" id="2.60.40.340:FF:000004">
    <property type="entry name" value="Nuclear factor NF-kappa-B p105 subunit isoform 1"/>
    <property type="match status" value="1"/>
</dbReference>
<dbReference type="Gene3D" id="1.25.40.20">
    <property type="entry name" value="Ankyrin repeat-containing domain"/>
    <property type="match status" value="1"/>
</dbReference>
<dbReference type="Gene3D" id="1.10.533.10">
    <property type="entry name" value="Death Domain, Fas"/>
    <property type="match status" value="1"/>
</dbReference>
<dbReference type="Gene3D" id="2.60.40.10">
    <property type="entry name" value="Immunoglobulins"/>
    <property type="match status" value="1"/>
</dbReference>
<dbReference type="Gene3D" id="2.60.40.340">
    <property type="entry name" value="Rel homology domain (RHD), DNA-binding domain"/>
    <property type="match status" value="1"/>
</dbReference>
<dbReference type="InterPro" id="IPR002110">
    <property type="entry name" value="Ankyrin_rpt"/>
</dbReference>
<dbReference type="InterPro" id="IPR036770">
    <property type="entry name" value="Ankyrin_rpt-contain_sf"/>
</dbReference>
<dbReference type="InterPro" id="IPR011029">
    <property type="entry name" value="DEATH-like_dom_sf"/>
</dbReference>
<dbReference type="InterPro" id="IPR000488">
    <property type="entry name" value="Death_dom"/>
</dbReference>
<dbReference type="InterPro" id="IPR013783">
    <property type="entry name" value="Ig-like_fold"/>
</dbReference>
<dbReference type="InterPro" id="IPR014756">
    <property type="entry name" value="Ig_E-set"/>
</dbReference>
<dbReference type="InterPro" id="IPR002909">
    <property type="entry name" value="IPT_dom"/>
</dbReference>
<dbReference type="InterPro" id="IPR033926">
    <property type="entry name" value="IPT_NFkappaB"/>
</dbReference>
<dbReference type="InterPro" id="IPR047096">
    <property type="entry name" value="NF-kB_p105_DD"/>
</dbReference>
<dbReference type="InterPro" id="IPR030503">
    <property type="entry name" value="NF-kB_p105_RHD_N"/>
</dbReference>
<dbReference type="InterPro" id="IPR000451">
    <property type="entry name" value="NFkB/Dor"/>
</dbReference>
<dbReference type="InterPro" id="IPR008967">
    <property type="entry name" value="p53-like_TF_DNA-bd_sf"/>
</dbReference>
<dbReference type="InterPro" id="IPR030492">
    <property type="entry name" value="RHD_CS"/>
</dbReference>
<dbReference type="InterPro" id="IPR032397">
    <property type="entry name" value="RHD_dimer"/>
</dbReference>
<dbReference type="InterPro" id="IPR011539">
    <property type="entry name" value="RHD_DNA_bind_dom"/>
</dbReference>
<dbReference type="InterPro" id="IPR037059">
    <property type="entry name" value="RHD_DNA_bind_dom_sf"/>
</dbReference>
<dbReference type="PANTHER" id="PTHR24169:SF9">
    <property type="entry name" value="NUCLEAR FACTOR NF-KAPPA-B P105 SUBUNIT"/>
    <property type="match status" value="1"/>
</dbReference>
<dbReference type="PANTHER" id="PTHR24169">
    <property type="entry name" value="NUCLEAR FACTOR NF-KAPPA-B PROTEIN"/>
    <property type="match status" value="1"/>
</dbReference>
<dbReference type="Pfam" id="PF12796">
    <property type="entry name" value="Ank_2"/>
    <property type="match status" value="2"/>
</dbReference>
<dbReference type="Pfam" id="PF00531">
    <property type="entry name" value="Death"/>
    <property type="match status" value="1"/>
</dbReference>
<dbReference type="Pfam" id="PF16179">
    <property type="entry name" value="RHD_dimer"/>
    <property type="match status" value="1"/>
</dbReference>
<dbReference type="Pfam" id="PF00554">
    <property type="entry name" value="RHD_DNA_bind"/>
    <property type="match status" value="1"/>
</dbReference>
<dbReference type="PRINTS" id="PR00057">
    <property type="entry name" value="NFKBTNSCPFCT"/>
</dbReference>
<dbReference type="SMART" id="SM00248">
    <property type="entry name" value="ANK"/>
    <property type="match status" value="7"/>
</dbReference>
<dbReference type="SMART" id="SM00005">
    <property type="entry name" value="DEATH"/>
    <property type="match status" value="1"/>
</dbReference>
<dbReference type="SMART" id="SM00429">
    <property type="entry name" value="IPT"/>
    <property type="match status" value="1"/>
</dbReference>
<dbReference type="SUPFAM" id="SSF48403">
    <property type="entry name" value="Ankyrin repeat"/>
    <property type="match status" value="1"/>
</dbReference>
<dbReference type="SUPFAM" id="SSF47986">
    <property type="entry name" value="DEATH domain"/>
    <property type="match status" value="1"/>
</dbReference>
<dbReference type="SUPFAM" id="SSF81296">
    <property type="entry name" value="E set domains"/>
    <property type="match status" value="1"/>
</dbReference>
<dbReference type="SUPFAM" id="SSF49417">
    <property type="entry name" value="p53-like transcription factors"/>
    <property type="match status" value="1"/>
</dbReference>
<dbReference type="PROSITE" id="PS50297">
    <property type="entry name" value="ANK_REP_REGION"/>
    <property type="match status" value="1"/>
</dbReference>
<dbReference type="PROSITE" id="PS50088">
    <property type="entry name" value="ANK_REPEAT"/>
    <property type="match status" value="5"/>
</dbReference>
<dbReference type="PROSITE" id="PS01204">
    <property type="entry name" value="REL_1"/>
    <property type="match status" value="1"/>
</dbReference>
<dbReference type="PROSITE" id="PS50254">
    <property type="entry name" value="REL_2"/>
    <property type="match status" value="1"/>
</dbReference>
<name>NFKB1_CHICK</name>
<gene>
    <name type="primary">NFKB1</name>
</gene>
<reference key="1">
    <citation type="journal article" date="1992" name="J. Virol.">
        <title>p105, the NF-kappa B p50 precursor protein, is one of the cellular proteins complexed with the v-Rel oncoprotein in transformed chicken spleen cells.</title>
        <authorList>
            <person name="Capobianco A.J."/>
            <person name="Chang D."/>
            <person name="Mosialos G."/>
            <person name="Gilmore T.D."/>
        </authorList>
    </citation>
    <scope>NUCLEOTIDE SEQUENCE [MRNA] (ISOFORM 2)</scope>
</reference>
<reference key="2">
    <citation type="journal article" date="1993" name="Gene">
        <title>Isolation of the chicken NF-kappa B p65 subunit-encoding cDNA and characterization of its products.</title>
        <authorList>
            <person name="Ikeda T."/>
            <person name="Honjo K."/>
            <person name="Hirota Y."/>
            <person name="Onodera T."/>
        </authorList>
    </citation>
    <scope>NUCLEOTIDE SEQUENCE [MRNA] (ISOFORM 3)</scope>
    <source>
        <tissue>Spleen</tissue>
    </source>
</reference>
<reference key="3">
    <citation type="journal article" date="1997" name="Oncogene">
        <title>Transcriptional and post-transcriptional regulation of kappaB-controlled genes by pp60v-src.</title>
        <authorList>
            <person name="Cabannes E."/>
            <person name="Vives M.F."/>
            <person name="Bedard P.A."/>
        </authorList>
    </citation>
    <scope>NUCLEOTIDE SEQUENCE [MRNA] (ISOFORM 2)</scope>
    <source>
        <tissue>Embryonic fibroblast</tissue>
    </source>
</reference>
<reference key="4">
    <citation type="journal article" date="2004" name="Nature">
        <title>Sequence and comparative analysis of the chicken genome provide unique perspectives on vertebrate evolution.</title>
        <authorList>
            <person name="Hillier L.W."/>
            <person name="Miller W."/>
            <person name="Birney E."/>
            <person name="Warren W."/>
            <person name="Hardison R.C."/>
            <person name="Ponting C.P."/>
            <person name="Bork P."/>
            <person name="Burt D.W."/>
            <person name="Groenen M.A.M."/>
            <person name="Delany M.E."/>
            <person name="Dodgson J.B."/>
            <person name="Chinwalla A.T."/>
            <person name="Cliften P.F."/>
            <person name="Clifton S.W."/>
            <person name="Delehaunty K.D."/>
            <person name="Fronick C."/>
            <person name="Fulton R.S."/>
            <person name="Graves T.A."/>
            <person name="Kremitzki C."/>
            <person name="Layman D."/>
            <person name="Magrini V."/>
            <person name="McPherson J.D."/>
            <person name="Miner T.L."/>
            <person name="Minx P."/>
            <person name="Nash W.E."/>
            <person name="Nhan M.N."/>
            <person name="Nelson J.O."/>
            <person name="Oddy L.G."/>
            <person name="Pohl C.S."/>
            <person name="Randall-Maher J."/>
            <person name="Smith S.M."/>
            <person name="Wallis J.W."/>
            <person name="Yang S.-P."/>
            <person name="Romanov M.N."/>
            <person name="Rondelli C.M."/>
            <person name="Paton B."/>
            <person name="Smith J."/>
            <person name="Morrice D."/>
            <person name="Daniels L."/>
            <person name="Tempest H.G."/>
            <person name="Robertson L."/>
            <person name="Masabanda J.S."/>
            <person name="Griffin D.K."/>
            <person name="Vignal A."/>
            <person name="Fillon V."/>
            <person name="Jacobbson L."/>
            <person name="Kerje S."/>
            <person name="Andersson L."/>
            <person name="Crooijmans R.P."/>
            <person name="Aerts J."/>
            <person name="van der Poel J.J."/>
            <person name="Ellegren H."/>
            <person name="Caldwell R.B."/>
            <person name="Hubbard S.J."/>
            <person name="Grafham D.V."/>
            <person name="Kierzek A.M."/>
            <person name="McLaren S.R."/>
            <person name="Overton I.M."/>
            <person name="Arakawa H."/>
            <person name="Beattie K.J."/>
            <person name="Bezzubov Y."/>
            <person name="Boardman P.E."/>
            <person name="Bonfield J.K."/>
            <person name="Croning M.D.R."/>
            <person name="Davies R.M."/>
            <person name="Francis M.D."/>
            <person name="Humphray S.J."/>
            <person name="Scott C.E."/>
            <person name="Taylor R.G."/>
            <person name="Tickle C."/>
            <person name="Brown W.R.A."/>
            <person name="Rogers J."/>
            <person name="Buerstedde J.-M."/>
            <person name="Wilson S.A."/>
            <person name="Stubbs L."/>
            <person name="Ovcharenko I."/>
            <person name="Gordon L."/>
            <person name="Lucas S."/>
            <person name="Miller M.M."/>
            <person name="Inoko H."/>
            <person name="Shiina T."/>
            <person name="Kaufman J."/>
            <person name="Salomonsen J."/>
            <person name="Skjoedt K."/>
            <person name="Wong G.K.-S."/>
            <person name="Wang J."/>
            <person name="Liu B."/>
            <person name="Wang J."/>
            <person name="Yu J."/>
            <person name="Yang H."/>
            <person name="Nefedov M."/>
            <person name="Koriabine M."/>
            <person name="Dejong P.J."/>
            <person name="Goodstadt L."/>
            <person name="Webber C."/>
            <person name="Dickens N.J."/>
            <person name="Letunic I."/>
            <person name="Suyama M."/>
            <person name="Torrents D."/>
            <person name="von Mering C."/>
            <person name="Zdobnov E.M."/>
            <person name="Makova K."/>
            <person name="Nekrutenko A."/>
            <person name="Elnitski L."/>
            <person name="Eswara P."/>
            <person name="King D.C."/>
            <person name="Yang S.-P."/>
            <person name="Tyekucheva S."/>
            <person name="Radakrishnan A."/>
            <person name="Harris R.S."/>
            <person name="Chiaromonte F."/>
            <person name="Taylor J."/>
            <person name="He J."/>
            <person name="Rijnkels M."/>
            <person name="Griffiths-Jones S."/>
            <person name="Ureta-Vidal A."/>
            <person name="Hoffman M.M."/>
            <person name="Severin J."/>
            <person name="Searle S.M.J."/>
            <person name="Law A.S."/>
            <person name="Speed D."/>
            <person name="Waddington D."/>
            <person name="Cheng Z."/>
            <person name="Tuzun E."/>
            <person name="Eichler E."/>
            <person name="Bao Z."/>
            <person name="Flicek P."/>
            <person name="Shteynberg D.D."/>
            <person name="Brent M.R."/>
            <person name="Bye J.M."/>
            <person name="Huckle E.J."/>
            <person name="Chatterji S."/>
            <person name="Dewey C."/>
            <person name="Pachter L."/>
            <person name="Kouranov A."/>
            <person name="Mourelatos Z."/>
            <person name="Hatzigeorgiou A.G."/>
            <person name="Paterson A.H."/>
            <person name="Ivarie R."/>
            <person name="Brandstrom M."/>
            <person name="Axelsson E."/>
            <person name="Backstrom N."/>
            <person name="Berlin S."/>
            <person name="Webster M.T."/>
            <person name="Pourquie O."/>
            <person name="Reymond A."/>
            <person name="Ucla C."/>
            <person name="Antonarakis S.E."/>
            <person name="Long M."/>
            <person name="Emerson J.J."/>
            <person name="Betran E."/>
            <person name="Dupanloup I."/>
            <person name="Kaessmann H."/>
            <person name="Hinrichs A.S."/>
            <person name="Bejerano G."/>
            <person name="Furey T.S."/>
            <person name="Harte R.A."/>
            <person name="Raney B."/>
            <person name="Siepel A."/>
            <person name="Kent W.J."/>
            <person name="Haussler D."/>
            <person name="Eyras E."/>
            <person name="Castelo R."/>
            <person name="Abril J.F."/>
            <person name="Castellano S."/>
            <person name="Camara F."/>
            <person name="Parra G."/>
            <person name="Guigo R."/>
            <person name="Bourque G."/>
            <person name="Tesler G."/>
            <person name="Pevzner P.A."/>
            <person name="Smit A."/>
            <person name="Fulton L.A."/>
            <person name="Mardis E.R."/>
            <person name="Wilson R.K."/>
        </authorList>
    </citation>
    <scope>NUCLEOTIDE SEQUENCE [LARGE SCALE GENOMIC DNA]</scope>
    <source>
        <strain>Red jungle fowl</strain>
    </source>
</reference>
<sequence>MAGEDPYIMGVSDPQMFAMDQLMGMSTIFNNTGYITSDLPLRTADGPYLQIIEQPKQRGFRFRYVCEGPSHGGLPGASSEKNKKSYPQVKICNYVGPAKVIVQLVTNGKYVHLHAHSLVGKFCEDGVCTVNAGPKDMVVGFANLGILHVTKKKVFETLETRMIDACKKGYNPGLLVHPELGYLQAEGCGDRQLTEREREIIRQAAVQQTKEMDLSVVRLMFTAFLPDSNGGFTRRLDPVISDAIYDSKAPNASNLKIVRMDRTAGCVTGGEEIYLLCDKVQKDDIQIRFYEEDENGGMWEGFGDFSPTDVHRQFAIVFKTPKYRDVNITKPASVFVQLRRKSDLETSEPKPFLYYPEIKDKEEVQRKRQKLMPNFSDGYGGGSGAGGGGMFGGGGGGAGSGFSYPSYGYSAFGGMHFHPGTTKSNAGMKHELSNSTVKKDEESSDKQSDKWDTKHDVKVETVEKNECRTSGHNEEKEDASLCCKDEGNKPKCGCQDGLFLEKAMQLAKRHCNALFDYAVTGDVRMLLAVQRHLTAVQDDNGDNVLHLSIIHLHRELVKNLLEVMPDMNYNNIINMRNDLYQTPLHLAVITKQAEVVEDLLKAGANVNLLDRHGNSVLHLAAAEGDDKILSLLLKHQKASSMIDLSNGEGLSAIHMVVTANSLSCLKLLIAAGVDVNAQEQKSGRTALHLAVEQENVPLAGCLLLEGDADVDSTTYDGTTPLHIAAGRGFTKLAAVLKAAGADPHVENFEPLFDVEEDVKDDDDDEGIVPGTTPLDMAANWEVYDILNGKPYIAAAAVSEDLLSQGPLRELNESSKQQLYKLLETPDPSKNWSTLAEKLGLGILNNAFRLSPSPSKTLLDNYKISGGTVQELIAALTQMDHTEAIEVIQKALSSSQRQSHQEDNTIEAFPSLSPTSFAKEETGELYNHKFQDPESTCDSGVETSFRKLSFTYSDSLNSKSSITLSKMTLGYRKAQCKAVIYLTR</sequence>
<keyword id="KW-0010">Activator</keyword>
<keyword id="KW-0025">Alternative splicing</keyword>
<keyword id="KW-0040">ANK repeat</keyword>
<keyword id="KW-0963">Cytoplasm</keyword>
<keyword id="KW-0238">DNA-binding</keyword>
<keyword id="KW-0539">Nucleus</keyword>
<keyword id="KW-0597">Phosphoprotein</keyword>
<keyword id="KW-1185">Reference proteome</keyword>
<keyword id="KW-0677">Repeat</keyword>
<keyword id="KW-0702">S-nitrosylation</keyword>
<keyword id="KW-0804">Transcription</keyword>
<keyword id="KW-0805">Transcription regulation</keyword>
<keyword id="KW-0832">Ubl conjugation</keyword>